<evidence type="ECO:0000250" key="1"/>
<evidence type="ECO:0000250" key="2">
    <source>
        <dbReference type="UniProtKB" id="Q9DAJ4"/>
    </source>
</evidence>
<evidence type="ECO:0000269" key="3">
    <source>
    </source>
</evidence>
<evidence type="ECO:0000269" key="4">
    <source>
    </source>
</evidence>
<evidence type="ECO:0000305" key="5"/>
<name>WDR83_HUMAN</name>
<sequence length="315" mass="34343">MAFPEPKPRPPELPQKRLKTLDCGQGAVRAVRFNVDGNYCLTCGSDKTLKLWNPLRGTLLRTYSGHGYEVLDAAGSFDNSSLCSGGGDKAVVLWDVASGQVVRKFRGHAGKVNTVQFNEEATVILSGSIDSSIRCWDCRSRRPEPVQTLDEARDGVSSVKVSDHEILAGSVDGRVRRYDLRMGQLFSDYVGSPITCTCFSRDGQCTLVSSLDSTLRLLDKDTGELLGEYKGHKNQEYKLDCCLSERDTHVVSCSEDGKVFFWDLVEGALALALPVGSGVVQSLAYHPTEPCLLTAMGGSVQCWREEAYEAEDGAG</sequence>
<organism>
    <name type="scientific">Homo sapiens</name>
    <name type="common">Human</name>
    <dbReference type="NCBI Taxonomy" id="9606"/>
    <lineage>
        <taxon>Eukaryota</taxon>
        <taxon>Metazoa</taxon>
        <taxon>Chordata</taxon>
        <taxon>Craniata</taxon>
        <taxon>Vertebrata</taxon>
        <taxon>Euteleostomi</taxon>
        <taxon>Mammalia</taxon>
        <taxon>Eutheria</taxon>
        <taxon>Euarchontoglires</taxon>
        <taxon>Primates</taxon>
        <taxon>Haplorrhini</taxon>
        <taxon>Catarrhini</taxon>
        <taxon>Hominidae</taxon>
        <taxon>Homo</taxon>
    </lineage>
</organism>
<proteinExistence type="evidence at protein level"/>
<protein>
    <recommendedName>
        <fullName>WD repeat domain-containing protein 83</fullName>
    </recommendedName>
    <alternativeName>
        <fullName>Mitogen-activated protein kinase organizer 1</fullName>
        <shortName>MAPK organizer 1</shortName>
    </alternativeName>
</protein>
<gene>
    <name type="primary">WDR83</name>
    <name type="synonym">MORG1</name>
</gene>
<feature type="chain" id="PRO_0000235263" description="WD repeat domain-containing protein 83">
    <location>
        <begin position="1"/>
        <end position="315"/>
    </location>
</feature>
<feature type="repeat" description="WD 1">
    <location>
        <begin position="23"/>
        <end position="62"/>
    </location>
</feature>
<feature type="repeat" description="WD 2">
    <location>
        <begin position="65"/>
        <end position="104"/>
    </location>
</feature>
<feature type="repeat" description="WD 3">
    <location>
        <begin position="107"/>
        <end position="146"/>
    </location>
</feature>
<feature type="repeat" description="WD 4">
    <location>
        <begin position="151"/>
        <end position="188"/>
    </location>
</feature>
<feature type="repeat" description="WD 5">
    <location>
        <begin position="190"/>
        <end position="228"/>
    </location>
</feature>
<feature type="repeat" description="WD 6">
    <location>
        <begin position="231"/>
        <end position="272"/>
    </location>
</feature>
<feature type="repeat" description="WD 7">
    <location>
        <begin position="275"/>
        <end position="313"/>
    </location>
</feature>
<feature type="sequence variant" id="VAR_053410" description="In dbSNP:rs34373915.">
    <original>G</original>
    <variation>S</variation>
    <location>
        <position position="278"/>
    </location>
</feature>
<feature type="sequence variant" id="VAR_053411" description="In dbSNP:rs35092999.">
    <original>R</original>
    <variation>Q</variation>
    <location>
        <position position="304"/>
    </location>
</feature>
<feature type="sequence conflict" description="In Ref. 2; BAD96915." evidence="5" ref="2">
    <original>S</original>
    <variation>L</variation>
    <location>
        <position position="162"/>
    </location>
</feature>
<feature type="sequence conflict" description="In Ref. 2; BAD96915." evidence="5" ref="2">
    <original>G</original>
    <variation>D</variation>
    <location>
        <position position="278"/>
    </location>
</feature>
<dbReference type="EMBL" id="AK223195">
    <property type="protein sequence ID" value="BAD96915.1"/>
    <property type="molecule type" value="mRNA"/>
</dbReference>
<dbReference type="EMBL" id="AK314164">
    <property type="protein sequence ID" value="BAG36848.1"/>
    <property type="molecule type" value="mRNA"/>
</dbReference>
<dbReference type="EMBL" id="CH471106">
    <property type="protein sequence ID" value="EAW84282.1"/>
    <property type="molecule type" value="Genomic_DNA"/>
</dbReference>
<dbReference type="EMBL" id="BC005870">
    <property type="protein sequence ID" value="AAH05870.1"/>
    <property type="molecule type" value="mRNA"/>
</dbReference>
<dbReference type="CCDS" id="CCDS12275.1"/>
<dbReference type="RefSeq" id="NP_001093207.1">
    <property type="nucleotide sequence ID" value="NM_001099737.3"/>
</dbReference>
<dbReference type="RefSeq" id="NP_115708.1">
    <property type="nucleotide sequence ID" value="NM_032332.4"/>
</dbReference>
<dbReference type="SMR" id="Q9BRX9"/>
<dbReference type="BioGRID" id="124019">
    <property type="interactions" value="203"/>
</dbReference>
<dbReference type="CORUM" id="Q9BRX9"/>
<dbReference type="FunCoup" id="Q9BRX9">
    <property type="interactions" value="1250"/>
</dbReference>
<dbReference type="IntAct" id="Q9BRX9">
    <property type="interactions" value="181"/>
</dbReference>
<dbReference type="MINT" id="Q9BRX9"/>
<dbReference type="STRING" id="9606.ENSP00000402653"/>
<dbReference type="GlyGen" id="Q9BRX9">
    <property type="glycosylation" value="1 site, 1 O-linked glycan (1 site)"/>
</dbReference>
<dbReference type="iPTMnet" id="Q9BRX9"/>
<dbReference type="PhosphoSitePlus" id="Q9BRX9"/>
<dbReference type="BioMuta" id="WDR83"/>
<dbReference type="DMDM" id="74761224"/>
<dbReference type="jPOST" id="Q9BRX9"/>
<dbReference type="MassIVE" id="Q9BRX9"/>
<dbReference type="PaxDb" id="9606-ENSP00000402653"/>
<dbReference type="PeptideAtlas" id="Q9BRX9"/>
<dbReference type="ProteomicsDB" id="78851"/>
<dbReference type="Pumba" id="Q9BRX9"/>
<dbReference type="Antibodypedia" id="26076">
    <property type="antibodies" value="213 antibodies from 29 providers"/>
</dbReference>
<dbReference type="DNASU" id="84292"/>
<dbReference type="Ensembl" id="ENST00000418543.8">
    <property type="protein sequence ID" value="ENSP00000402653.3"/>
    <property type="gene ID" value="ENSG00000123154.12"/>
</dbReference>
<dbReference type="GeneID" id="84292"/>
<dbReference type="KEGG" id="hsa:84292"/>
<dbReference type="MANE-Select" id="ENST00000418543.8">
    <property type="protein sequence ID" value="ENSP00000402653.3"/>
    <property type="RefSeq nucleotide sequence ID" value="NM_001099737.3"/>
    <property type="RefSeq protein sequence ID" value="NP_001093207.1"/>
</dbReference>
<dbReference type="UCSC" id="uc002mue.5">
    <property type="organism name" value="human"/>
</dbReference>
<dbReference type="AGR" id="HGNC:32672"/>
<dbReference type="CTD" id="84292"/>
<dbReference type="DisGeNET" id="84292"/>
<dbReference type="GeneCards" id="WDR83"/>
<dbReference type="HGNC" id="HGNC:32672">
    <property type="gene designation" value="WDR83"/>
</dbReference>
<dbReference type="HPA" id="ENSG00000123154">
    <property type="expression patterns" value="Low tissue specificity"/>
</dbReference>
<dbReference type="MalaCards" id="WDR83"/>
<dbReference type="neXtProt" id="NX_Q9BRX9"/>
<dbReference type="OpenTargets" id="ENSG00000123154"/>
<dbReference type="PharmGKB" id="PA165394765"/>
<dbReference type="VEuPathDB" id="HostDB:ENSG00000123154"/>
<dbReference type="eggNOG" id="KOG0316">
    <property type="taxonomic scope" value="Eukaryota"/>
</dbReference>
<dbReference type="GeneTree" id="ENSGT00940000159016"/>
<dbReference type="InParanoid" id="Q9BRX9"/>
<dbReference type="OMA" id="MCWDIRT"/>
<dbReference type="OrthoDB" id="71437at2759"/>
<dbReference type="PAN-GO" id="Q9BRX9">
    <property type="GO annotations" value="2 GO annotations based on evolutionary models"/>
</dbReference>
<dbReference type="PhylomeDB" id="Q9BRX9"/>
<dbReference type="TreeFam" id="TF314828"/>
<dbReference type="PathwayCommons" id="Q9BRX9"/>
<dbReference type="Reactome" id="R-HSA-5674135">
    <property type="pathway name" value="MAP2K and MAPK activation"/>
</dbReference>
<dbReference type="SignaLink" id="Q9BRX9"/>
<dbReference type="SIGNOR" id="Q9BRX9"/>
<dbReference type="BioGRID-ORCS" id="84292">
    <property type="hits" value="328 hits in 1163 CRISPR screens"/>
</dbReference>
<dbReference type="ChiTaRS" id="WDR83">
    <property type="organism name" value="human"/>
</dbReference>
<dbReference type="GenomeRNAi" id="84292"/>
<dbReference type="Pharos" id="Q9BRX9">
    <property type="development level" value="Tbio"/>
</dbReference>
<dbReference type="PRO" id="PR:Q9BRX9"/>
<dbReference type="Proteomes" id="UP000005640">
    <property type="component" value="Chromosome 19"/>
</dbReference>
<dbReference type="RNAct" id="Q9BRX9">
    <property type="molecule type" value="protein"/>
</dbReference>
<dbReference type="Bgee" id="ENSG00000123154">
    <property type="expression patterns" value="Expressed in right hemisphere of cerebellum and 119 other cell types or tissues"/>
</dbReference>
<dbReference type="ExpressionAtlas" id="Q9BRX9">
    <property type="expression patterns" value="baseline and differential"/>
</dbReference>
<dbReference type="GO" id="GO:0071013">
    <property type="term" value="C:catalytic step 2 spliceosome"/>
    <property type="evidence" value="ECO:0000314"/>
    <property type="project" value="UniProtKB"/>
</dbReference>
<dbReference type="GO" id="GO:0010008">
    <property type="term" value="C:endosome membrane"/>
    <property type="evidence" value="ECO:0000304"/>
    <property type="project" value="Reactome"/>
</dbReference>
<dbReference type="GO" id="GO:0005764">
    <property type="term" value="C:lysosome"/>
    <property type="evidence" value="ECO:0007669"/>
    <property type="project" value="UniProtKB-SubCell"/>
</dbReference>
<dbReference type="GO" id="GO:0005681">
    <property type="term" value="C:spliceosomal complex"/>
    <property type="evidence" value="ECO:0000314"/>
    <property type="project" value="UniProtKB"/>
</dbReference>
<dbReference type="GO" id="GO:0090594">
    <property type="term" value="P:inflammatory response to wounding"/>
    <property type="evidence" value="ECO:0007669"/>
    <property type="project" value="Ensembl"/>
</dbReference>
<dbReference type="GO" id="GO:0000398">
    <property type="term" value="P:mRNA splicing, via spliceosome"/>
    <property type="evidence" value="ECO:0000314"/>
    <property type="project" value="UniProtKB"/>
</dbReference>
<dbReference type="GO" id="GO:0001843">
    <property type="term" value="P:neural tube closure"/>
    <property type="evidence" value="ECO:0007669"/>
    <property type="project" value="Ensembl"/>
</dbReference>
<dbReference type="GO" id="GO:0060674">
    <property type="term" value="P:placenta blood vessel development"/>
    <property type="evidence" value="ECO:0007669"/>
    <property type="project" value="Ensembl"/>
</dbReference>
<dbReference type="GO" id="GO:0043122">
    <property type="term" value="P:regulation of canonical NF-kappaB signal transduction"/>
    <property type="evidence" value="ECO:0007669"/>
    <property type="project" value="Ensembl"/>
</dbReference>
<dbReference type="GO" id="GO:0001666">
    <property type="term" value="P:response to hypoxia"/>
    <property type="evidence" value="ECO:0007669"/>
    <property type="project" value="Ensembl"/>
</dbReference>
<dbReference type="GO" id="GO:0032496">
    <property type="term" value="P:response to lipopolysaccharide"/>
    <property type="evidence" value="ECO:0007669"/>
    <property type="project" value="Ensembl"/>
</dbReference>
<dbReference type="GO" id="GO:0000375">
    <property type="term" value="P:RNA splicing, via transesterification reactions"/>
    <property type="evidence" value="ECO:0000314"/>
    <property type="project" value="UniProtKB"/>
</dbReference>
<dbReference type="CDD" id="cd00200">
    <property type="entry name" value="WD40"/>
    <property type="match status" value="1"/>
</dbReference>
<dbReference type="FunFam" id="2.130.10.10:FF:000273">
    <property type="entry name" value="WD repeat domain-containing protein 83"/>
    <property type="match status" value="1"/>
</dbReference>
<dbReference type="Gene3D" id="2.130.10.10">
    <property type="entry name" value="YVTN repeat-like/Quinoprotein amine dehydrogenase"/>
    <property type="match status" value="1"/>
</dbReference>
<dbReference type="InterPro" id="IPR020472">
    <property type="entry name" value="G-protein_beta_WD-40_rep"/>
</dbReference>
<dbReference type="InterPro" id="IPR015943">
    <property type="entry name" value="WD40/YVTN_repeat-like_dom_sf"/>
</dbReference>
<dbReference type="InterPro" id="IPR019775">
    <property type="entry name" value="WD40_repeat_CS"/>
</dbReference>
<dbReference type="InterPro" id="IPR036322">
    <property type="entry name" value="WD40_repeat_dom_sf"/>
</dbReference>
<dbReference type="InterPro" id="IPR001680">
    <property type="entry name" value="WD40_rpt"/>
</dbReference>
<dbReference type="InterPro" id="IPR051980">
    <property type="entry name" value="WD_repeat_MORG1"/>
</dbReference>
<dbReference type="PANTHER" id="PTHR22842:SF3">
    <property type="entry name" value="WD REPEAT DOMAIN-CONTAINING PROTEIN 83"/>
    <property type="match status" value="1"/>
</dbReference>
<dbReference type="PANTHER" id="PTHR22842">
    <property type="entry name" value="WD40 REPEAT PROTEIN"/>
    <property type="match status" value="1"/>
</dbReference>
<dbReference type="Pfam" id="PF00400">
    <property type="entry name" value="WD40"/>
    <property type="match status" value="5"/>
</dbReference>
<dbReference type="PRINTS" id="PR00320">
    <property type="entry name" value="GPROTEINBRPT"/>
</dbReference>
<dbReference type="SMART" id="SM00320">
    <property type="entry name" value="WD40"/>
    <property type="match status" value="7"/>
</dbReference>
<dbReference type="SUPFAM" id="SSF50978">
    <property type="entry name" value="WD40 repeat-like"/>
    <property type="match status" value="1"/>
</dbReference>
<dbReference type="PROSITE" id="PS00678">
    <property type="entry name" value="WD_REPEATS_1"/>
    <property type="match status" value="2"/>
</dbReference>
<dbReference type="PROSITE" id="PS50082">
    <property type="entry name" value="WD_REPEATS_2"/>
    <property type="match status" value="3"/>
</dbReference>
<dbReference type="PROSITE" id="PS50294">
    <property type="entry name" value="WD_REPEATS_REGION"/>
    <property type="match status" value="1"/>
</dbReference>
<accession>Q9BRX9</accession>
<accession>B2RAF1</accession>
<accession>Q53FT6</accession>
<reference key="1">
    <citation type="journal article" date="2004" name="Nat. Genet.">
        <title>Complete sequencing and characterization of 21,243 full-length human cDNAs.</title>
        <authorList>
            <person name="Ota T."/>
            <person name="Suzuki Y."/>
            <person name="Nishikawa T."/>
            <person name="Otsuki T."/>
            <person name="Sugiyama T."/>
            <person name="Irie R."/>
            <person name="Wakamatsu A."/>
            <person name="Hayashi K."/>
            <person name="Sato H."/>
            <person name="Nagai K."/>
            <person name="Kimura K."/>
            <person name="Makita H."/>
            <person name="Sekine M."/>
            <person name="Obayashi M."/>
            <person name="Nishi T."/>
            <person name="Shibahara T."/>
            <person name="Tanaka T."/>
            <person name="Ishii S."/>
            <person name="Yamamoto J."/>
            <person name="Saito K."/>
            <person name="Kawai Y."/>
            <person name="Isono Y."/>
            <person name="Nakamura Y."/>
            <person name="Nagahari K."/>
            <person name="Murakami K."/>
            <person name="Yasuda T."/>
            <person name="Iwayanagi T."/>
            <person name="Wagatsuma M."/>
            <person name="Shiratori A."/>
            <person name="Sudo H."/>
            <person name="Hosoiri T."/>
            <person name="Kaku Y."/>
            <person name="Kodaira H."/>
            <person name="Kondo H."/>
            <person name="Sugawara M."/>
            <person name="Takahashi M."/>
            <person name="Kanda K."/>
            <person name="Yokoi T."/>
            <person name="Furuya T."/>
            <person name="Kikkawa E."/>
            <person name="Omura Y."/>
            <person name="Abe K."/>
            <person name="Kamihara K."/>
            <person name="Katsuta N."/>
            <person name="Sato K."/>
            <person name="Tanikawa M."/>
            <person name="Yamazaki M."/>
            <person name="Ninomiya K."/>
            <person name="Ishibashi T."/>
            <person name="Yamashita H."/>
            <person name="Murakawa K."/>
            <person name="Fujimori K."/>
            <person name="Tanai H."/>
            <person name="Kimata M."/>
            <person name="Watanabe M."/>
            <person name="Hiraoka S."/>
            <person name="Chiba Y."/>
            <person name="Ishida S."/>
            <person name="Ono Y."/>
            <person name="Takiguchi S."/>
            <person name="Watanabe S."/>
            <person name="Yosida M."/>
            <person name="Hotuta T."/>
            <person name="Kusano J."/>
            <person name="Kanehori K."/>
            <person name="Takahashi-Fujii A."/>
            <person name="Hara H."/>
            <person name="Tanase T.-O."/>
            <person name="Nomura Y."/>
            <person name="Togiya S."/>
            <person name="Komai F."/>
            <person name="Hara R."/>
            <person name="Takeuchi K."/>
            <person name="Arita M."/>
            <person name="Imose N."/>
            <person name="Musashino K."/>
            <person name="Yuuki H."/>
            <person name="Oshima A."/>
            <person name="Sasaki N."/>
            <person name="Aotsuka S."/>
            <person name="Yoshikawa Y."/>
            <person name="Matsunawa H."/>
            <person name="Ichihara T."/>
            <person name="Shiohata N."/>
            <person name="Sano S."/>
            <person name="Moriya S."/>
            <person name="Momiyama H."/>
            <person name="Satoh N."/>
            <person name="Takami S."/>
            <person name="Terashima Y."/>
            <person name="Suzuki O."/>
            <person name="Nakagawa S."/>
            <person name="Senoh A."/>
            <person name="Mizoguchi H."/>
            <person name="Goto Y."/>
            <person name="Shimizu F."/>
            <person name="Wakebe H."/>
            <person name="Hishigaki H."/>
            <person name="Watanabe T."/>
            <person name="Sugiyama A."/>
            <person name="Takemoto M."/>
            <person name="Kawakami B."/>
            <person name="Yamazaki M."/>
            <person name="Watanabe K."/>
            <person name="Kumagai A."/>
            <person name="Itakura S."/>
            <person name="Fukuzumi Y."/>
            <person name="Fujimori Y."/>
            <person name="Komiyama M."/>
            <person name="Tashiro H."/>
            <person name="Tanigami A."/>
            <person name="Fujiwara T."/>
            <person name="Ono T."/>
            <person name="Yamada K."/>
            <person name="Fujii Y."/>
            <person name="Ozaki K."/>
            <person name="Hirao M."/>
            <person name="Ohmori Y."/>
            <person name="Kawabata A."/>
            <person name="Hikiji T."/>
            <person name="Kobatake N."/>
            <person name="Inagaki H."/>
            <person name="Ikema Y."/>
            <person name="Okamoto S."/>
            <person name="Okitani R."/>
            <person name="Kawakami T."/>
            <person name="Noguchi S."/>
            <person name="Itoh T."/>
            <person name="Shigeta K."/>
            <person name="Senba T."/>
            <person name="Matsumura K."/>
            <person name="Nakajima Y."/>
            <person name="Mizuno T."/>
            <person name="Morinaga M."/>
            <person name="Sasaki M."/>
            <person name="Togashi T."/>
            <person name="Oyama M."/>
            <person name="Hata H."/>
            <person name="Watanabe M."/>
            <person name="Komatsu T."/>
            <person name="Mizushima-Sugano J."/>
            <person name="Satoh T."/>
            <person name="Shirai Y."/>
            <person name="Takahashi Y."/>
            <person name="Nakagawa K."/>
            <person name="Okumura K."/>
            <person name="Nagase T."/>
            <person name="Nomura N."/>
            <person name="Kikuchi H."/>
            <person name="Masuho Y."/>
            <person name="Yamashita R."/>
            <person name="Nakai K."/>
            <person name="Yada T."/>
            <person name="Nakamura Y."/>
            <person name="Ohara O."/>
            <person name="Isogai T."/>
            <person name="Sugano S."/>
        </authorList>
    </citation>
    <scope>NUCLEOTIDE SEQUENCE [LARGE SCALE MRNA]</scope>
</reference>
<reference key="2">
    <citation type="submission" date="2005-04" db="EMBL/GenBank/DDBJ databases">
        <authorList>
            <person name="Suzuki Y."/>
            <person name="Sugano S."/>
            <person name="Totoki Y."/>
            <person name="Toyoda A."/>
            <person name="Takeda T."/>
            <person name="Sakaki Y."/>
            <person name="Tanaka A."/>
            <person name="Yokoyama S."/>
        </authorList>
    </citation>
    <scope>NUCLEOTIDE SEQUENCE [LARGE SCALE MRNA]</scope>
    <source>
        <tissue>Kidney proximal tubule</tissue>
    </source>
</reference>
<reference key="3">
    <citation type="submission" date="2005-07" db="EMBL/GenBank/DDBJ databases">
        <authorList>
            <person name="Mural R.J."/>
            <person name="Istrail S."/>
            <person name="Sutton G.G."/>
            <person name="Florea L."/>
            <person name="Halpern A.L."/>
            <person name="Mobarry C.M."/>
            <person name="Lippert R."/>
            <person name="Walenz B."/>
            <person name="Shatkay H."/>
            <person name="Dew I."/>
            <person name="Miller J.R."/>
            <person name="Flanigan M.J."/>
            <person name="Edwards N.J."/>
            <person name="Bolanos R."/>
            <person name="Fasulo D."/>
            <person name="Halldorsson B.V."/>
            <person name="Hannenhalli S."/>
            <person name="Turner R."/>
            <person name="Yooseph S."/>
            <person name="Lu F."/>
            <person name="Nusskern D.R."/>
            <person name="Shue B.C."/>
            <person name="Zheng X.H."/>
            <person name="Zhong F."/>
            <person name="Delcher A.L."/>
            <person name="Huson D.H."/>
            <person name="Kravitz S.A."/>
            <person name="Mouchard L."/>
            <person name="Reinert K."/>
            <person name="Remington K.A."/>
            <person name="Clark A.G."/>
            <person name="Waterman M.S."/>
            <person name="Eichler E.E."/>
            <person name="Adams M.D."/>
            <person name="Hunkapiller M.W."/>
            <person name="Myers E.W."/>
            <person name="Venter J.C."/>
        </authorList>
    </citation>
    <scope>NUCLEOTIDE SEQUENCE [LARGE SCALE GENOMIC DNA]</scope>
</reference>
<reference key="4">
    <citation type="journal article" date="2004" name="Genome Res.">
        <title>The status, quality, and expansion of the NIH full-length cDNA project: the Mammalian Gene Collection (MGC).</title>
        <authorList>
            <consortium name="The MGC Project Team"/>
        </authorList>
    </citation>
    <scope>NUCLEOTIDE SEQUENCE [LARGE SCALE MRNA]</scope>
    <source>
        <tissue>Muscle</tissue>
    </source>
</reference>
<reference key="5">
    <citation type="journal article" date="2002" name="RNA">
        <title>Purification and characterization of native spliceosomes suitable for three-dimensional structural analysis.</title>
        <authorList>
            <person name="Jurica M.S."/>
            <person name="Licklider L.J."/>
            <person name="Gygi S.P."/>
            <person name="Grigorieff N."/>
            <person name="Moore M.J."/>
        </authorList>
    </citation>
    <scope>IDENTIFICATION BY MASS SPECTROMETRY</scope>
    <scope>IDENTIFICATION IN THE SPLICEOSOMAL C COMPLEX</scope>
</reference>
<reference key="6">
    <citation type="journal article" date="2013" name="J. Cell Biol.">
        <title>The WD40 protein Morg1 facilitates Par6-aPKC binding to Crb3 for apical identity in epithelial cells.</title>
        <authorList>
            <person name="Hayase J."/>
            <person name="Kamakura S."/>
            <person name="Iwakiri Y."/>
            <person name="Yamaguchi Y."/>
            <person name="Izaki T."/>
            <person name="Ito T."/>
            <person name="Sumimoto H."/>
        </authorList>
    </citation>
    <scope>FUNCTION</scope>
    <scope>INTERACTION WITH PARD6B AND CRB3</scope>
</reference>
<reference key="7">
    <citation type="journal article" date="2023" name="Mol. Cell">
        <title>MORG1 limits mTORC1 signaling by inhibiting Rag GTPases.</title>
        <authorList>
            <person name="Abudu Y.P."/>
            <person name="Kournoutis A."/>
            <person name="Brenne H.B."/>
            <person name="Lamark T."/>
            <person name="Johansen T."/>
        </authorList>
    </citation>
    <scope>FUNCTION</scope>
    <scope>INTERACTION WITH RRAGA AND SQSTM1</scope>
    <scope>SUBCELLULAR LOCATION</scope>
</reference>
<comment type="function">
    <text evidence="2 3 4">Molecular scaffold protein for various multimeric protein complexes. Acts as a module in the assembly of a multicomponent scaffold for the ERK pathway, linking ERK responses to specific agonists. At low concentrations it enhances ERK activation, whereas high concentrations lead to the inhibition of ERK activation. Also involved in response to hypoxia by acting as a negative regulator of HIF1A/HIF-1-alpha via its interaction with EGLN3/PHD3. May promote degradation of HIF1A. May act by recruiting signaling complexes to a specific upstream activator (By similarity). May also be involved in pre-mRNA splicing. Participates in tight junction development by regulating apico-basal polarity, a key step in tissue development and organization. Mechanistically, regulates the translocation of PAR6-aPKC from the cytoplasm to the apical surface by acting as an adapter between PARD6B AND CRB3 (PubMed:23439680). Also acts as a negative regulator of mTORC1 under nutrient-rich conditions by binding to the active Rag GTPases to inhibit mTORC1 localization to the lysosome and phosphorylation of downstream targets. This facilitates constitutive basal autophagy during nutrient availability (PubMed:38103557).</text>
</comment>
<comment type="subunit">
    <text evidence="2 3 4">Interacts with EGLN3/PHD3. Interacts with ERK signaling proteins MAP2K1/MEK1, MAP2K2/MEK2, LAMTOR3, ARAF/Raf-1, MAPK1/ERK2 and MAPK3/ERK1 (By similarity). Identified in the spliceosome C complex. Interacts with PARD6B and CRB3 (PubMed:23439680). Interacts strongly with GTP-bound RRAGA but not with inactive GDP-bound (PubMed:38103557). Interacts with p62/SQSTM1 (PubMed:38103557).</text>
</comment>
<comment type="interaction">
    <interactant intactId="EBI-7705033">
        <id>Q9BRX9</id>
    </interactant>
    <interactant intactId="EBI-2512328">
        <id>O60306</id>
        <label>AQR</label>
    </interactant>
    <organismsDiffer>false</organismsDiffer>
    <experiments>5</experiments>
</comment>
<comment type="interaction">
    <interactant intactId="EBI-7705033">
        <id>Q9BRX9</id>
    </interactant>
    <interactant intactId="EBI-930964">
        <id>P54253</id>
        <label>ATXN1</label>
    </interactant>
    <organismsDiffer>false</organismsDiffer>
    <experiments>6</experiments>
</comment>
<comment type="interaction">
    <interactant intactId="EBI-7705033">
        <id>Q9BRX9</id>
    </interactant>
    <interactant intactId="EBI-765407">
        <id>P41182</id>
        <label>BCL6</label>
    </interactant>
    <organismsDiffer>false</organismsDiffer>
    <experiments>3</experiments>
</comment>
<comment type="interaction">
    <interactant intactId="EBI-7705033">
        <id>Q9BRX9</id>
    </interactant>
    <interactant intactId="EBI-21553822">
        <id>Q96A83-2</id>
        <label>COL26A1</label>
    </interactant>
    <organismsDiffer>false</organismsDiffer>
    <experiments>3</experiments>
</comment>
<comment type="interaction">
    <interactant intactId="EBI-7705033">
        <id>Q9BRX9</id>
    </interactant>
    <interactant intactId="EBI-886">
        <id>P46108</id>
        <label>CRK</label>
    </interactant>
    <organismsDiffer>false</organismsDiffer>
    <experiments>2</experiments>
</comment>
<comment type="interaction">
    <interactant intactId="EBI-7705033">
        <id>Q9BRX9</id>
    </interactant>
    <interactant intactId="EBI-10976677">
        <id>G5E9A7</id>
        <label>DMWD</label>
    </interactant>
    <organismsDiffer>false</organismsDiffer>
    <experiments>3</experiments>
</comment>
<comment type="interaction">
    <interactant intactId="EBI-7705033">
        <id>Q9BRX9</id>
    </interactant>
    <interactant intactId="EBI-12593112">
        <id>O75190-2</id>
        <label>DNAJB6</label>
    </interactant>
    <organismsDiffer>false</organismsDiffer>
    <experiments>3</experiments>
</comment>
<comment type="interaction">
    <interactant intactId="EBI-7705033">
        <id>Q9BRX9</id>
    </interactant>
    <interactant intactId="EBI-395638">
        <id>O14645</id>
        <label>DNALI1</label>
    </interactant>
    <organismsDiffer>false</organismsDiffer>
    <experiments>3</experiments>
</comment>
<comment type="interaction">
    <interactant intactId="EBI-7705033">
        <id>Q9BRX9</id>
    </interactant>
    <interactant intactId="EBI-11986315">
        <id>Q9H5Z6-2</id>
        <label>FAM124B</label>
    </interactant>
    <organismsDiffer>false</organismsDiffer>
    <experiments>3</experiments>
</comment>
<comment type="interaction">
    <interactant intactId="EBI-7705033">
        <id>Q9BRX9</id>
    </interactant>
    <interactant intactId="EBI-9641086">
        <id>P21333-2</id>
        <label>FLNA</label>
    </interactant>
    <organismsDiffer>false</organismsDiffer>
    <experiments>3</experiments>
</comment>
<comment type="interaction">
    <interactant intactId="EBI-7705033">
        <id>Q9BRX9</id>
    </interactant>
    <interactant intactId="EBI-725515">
        <id>O43559</id>
        <label>FRS3</label>
    </interactant>
    <organismsDiffer>false</organismsDiffer>
    <experiments>3</experiments>
</comment>
<comment type="interaction">
    <interactant intactId="EBI-7705033">
        <id>Q9BRX9</id>
    </interactant>
    <interactant intactId="EBI-744302">
        <id>P14136</id>
        <label>GFAP</label>
    </interactant>
    <organismsDiffer>false</organismsDiffer>
    <experiments>3</experiments>
</comment>
<comment type="interaction">
    <interactant intactId="EBI-7705033">
        <id>Q9BRX9</id>
    </interactant>
    <interactant intactId="EBI-11975289">
        <id>Q9Y223-2</id>
        <label>GNE</label>
    </interactant>
    <organismsDiffer>false</organismsDiffer>
    <experiments>3</experiments>
</comment>
<comment type="interaction">
    <interactant intactId="EBI-7705033">
        <id>Q9BRX9</id>
    </interactant>
    <interactant intactId="EBI-740785">
        <id>P49639</id>
        <label>HOXA1</label>
    </interactant>
    <organismsDiffer>false</organismsDiffer>
    <experiments>3</experiments>
</comment>
<comment type="interaction">
    <interactant intactId="EBI-7705033">
        <id>Q9BRX9</id>
    </interactant>
    <interactant intactId="EBI-352682">
        <id>P04792</id>
        <label>HSPB1</label>
    </interactant>
    <organismsDiffer>false</organismsDiffer>
    <experiments>4</experiments>
</comment>
<comment type="interaction">
    <interactant intactId="EBI-7705033">
        <id>Q9BRX9</id>
    </interactant>
    <interactant intactId="EBI-1055254">
        <id>Q8WXH2</id>
        <label>JPH3</label>
    </interactant>
    <organismsDiffer>false</organismsDiffer>
    <experiments>3</experiments>
</comment>
<comment type="interaction">
    <interactant intactId="EBI-7705033">
        <id>Q9BRX9</id>
    </interactant>
    <interactant intactId="EBI-4397613">
        <id>Q7L273</id>
        <label>KCTD9</label>
    </interactant>
    <organismsDiffer>false</organismsDiffer>
    <experiments>3</experiments>
</comment>
<comment type="interaction">
    <interactant intactId="EBI-7705033">
        <id>Q9BRX9</id>
    </interactant>
    <interactant intactId="EBI-751001">
        <id>Q14145</id>
        <label>KEAP1</label>
    </interactant>
    <organismsDiffer>false</organismsDiffer>
    <experiments>7</experiments>
</comment>
<comment type="interaction">
    <interactant intactId="EBI-7705033">
        <id>Q9BRX9</id>
    </interactant>
    <interactant intactId="EBI-10975473">
        <id>O60333-2</id>
        <label>KIF1B</label>
    </interactant>
    <organismsDiffer>false</organismsDiffer>
    <experiments>3</experiments>
</comment>
<comment type="interaction">
    <interactant intactId="EBI-7705033">
        <id>Q9BRX9</id>
    </interactant>
    <interactant intactId="EBI-948266">
        <id>O14901</id>
        <label>KLF11</label>
    </interactant>
    <organismsDiffer>false</organismsDiffer>
    <experiments>3</experiments>
</comment>
<comment type="interaction">
    <interactant intactId="EBI-7705033">
        <id>Q9BRX9</id>
    </interactant>
    <interactant intactId="EBI-2341787">
        <id>Q17RB8</id>
        <label>LONRF1</label>
    </interactant>
    <organismsDiffer>false</organismsDiffer>
    <experiments>3</experiments>
</comment>
<comment type="interaction">
    <interactant intactId="EBI-7705033">
        <id>Q9BRX9</id>
    </interactant>
    <interactant intactId="EBI-713665">
        <id>P19404</id>
        <label>NDUFV2</label>
    </interactant>
    <organismsDiffer>false</organismsDiffer>
    <experiments>3</experiments>
</comment>
<comment type="interaction">
    <interactant intactId="EBI-7705033">
        <id>Q9BRX9</id>
    </interactant>
    <interactant intactId="EBI-12025760">
        <id>Q86UR1-2</id>
        <label>NOXA1</label>
    </interactant>
    <organismsDiffer>false</organismsDiffer>
    <experiments>3</experiments>
</comment>
<comment type="interaction">
    <interactant intactId="EBI-7705033">
        <id>Q9BRX9</id>
    </interactant>
    <interactant intactId="EBI-50433196">
        <id>A0A6Q8PF08</id>
        <label>PMP22</label>
    </interactant>
    <organismsDiffer>false</organismsDiffer>
    <experiments>3</experiments>
</comment>
<comment type="interaction">
    <interactant intactId="EBI-7705033">
        <id>Q9BRX9</id>
    </interactant>
    <interactant intactId="EBI-2557649">
        <id>Q9Y3C6</id>
        <label>PPIL1</label>
    </interactant>
    <organismsDiffer>false</organismsDiffer>
    <experiments>3</experiments>
</comment>
<comment type="interaction">
    <interactant intactId="EBI-7705033">
        <id>Q9BRX9</id>
    </interactant>
    <interactant intactId="EBI-1053424">
        <id>O43741</id>
        <label>PRKAB2</label>
    </interactant>
    <organismsDiffer>false</organismsDiffer>
    <experiments>3</experiments>
</comment>
<comment type="interaction">
    <interactant intactId="EBI-7705033">
        <id>Q9BRX9</id>
    </interactant>
    <interactant intactId="EBI-538479">
        <id>Q6P2Q9</id>
        <label>PRPF8</label>
    </interactant>
    <organismsDiffer>false</organismsDiffer>
    <experiments>2</experiments>
</comment>
<comment type="interaction">
    <interactant intactId="EBI-7705033">
        <id>Q9BRX9</id>
    </interactant>
    <interactant intactId="EBI-749195">
        <id>P60891</id>
        <label>PRPS1</label>
    </interactant>
    <organismsDiffer>false</organismsDiffer>
    <experiments>3</experiments>
</comment>
<comment type="interaction">
    <interactant intactId="EBI-7705033">
        <id>Q9BRX9</id>
    </interactant>
    <interactant intactId="EBI-396669">
        <id>Q9Y3C5</id>
        <label>RNF11</label>
    </interactant>
    <organismsDiffer>false</organismsDiffer>
    <experiments>3</experiments>
</comment>
<comment type="interaction">
    <interactant intactId="EBI-7705033">
        <id>Q9BRX9</id>
    </interactant>
    <interactant intactId="EBI-348469">
        <id>Q15427</id>
        <label>SF3B4</label>
    </interactant>
    <organismsDiffer>false</organismsDiffer>
    <experiments>2</experiments>
</comment>
<comment type="interaction">
    <interactant intactId="EBI-7705033">
        <id>Q9BRX9</id>
    </interactant>
    <interactant intactId="EBI-766589">
        <id>P09234</id>
        <label>SNRPC</label>
    </interactant>
    <organismsDiffer>false</organismsDiffer>
    <experiments>2</experiments>
</comment>
<comment type="interaction">
    <interactant intactId="EBI-7705033">
        <id>Q9BRX9</id>
    </interactant>
    <interactant intactId="EBI-5235340">
        <id>Q7Z699</id>
        <label>SPRED1</label>
    </interactant>
    <organismsDiffer>false</organismsDiffer>
    <experiments>3</experiments>
</comment>
<comment type="interaction">
    <interactant intactId="EBI-7705033">
        <id>Q9BRX9</id>
    </interactant>
    <interactant intactId="EBI-372899">
        <id>Q13148</id>
        <label>TARDBP</label>
    </interactant>
    <organismsDiffer>false</organismsDiffer>
    <experiments>6</experiments>
</comment>
<comment type="interaction">
    <interactant intactId="EBI-7705033">
        <id>Q9BRX9</id>
    </interactant>
    <interactant intactId="EBI-18393978">
        <id>A6NER0</id>
        <label>TBC1D3F</label>
    </interactant>
    <organismsDiffer>false</organismsDiffer>
    <experiments>2</experiments>
</comment>
<comment type="interaction">
    <interactant intactId="EBI-7705033">
        <id>Q9BRX9</id>
    </interactant>
    <interactant intactId="EBI-3939165">
        <id>O43711</id>
        <label>TLX3</label>
    </interactant>
    <organismsDiffer>false</organismsDiffer>
    <experiments>3</experiments>
</comment>
<comment type="interaction">
    <interactant intactId="EBI-7705033">
        <id>Q9BRX9</id>
    </interactant>
    <interactant intactId="EBI-711909">
        <id>P02766</id>
        <label>TTR</label>
    </interactant>
    <organismsDiffer>false</organismsDiffer>
    <experiments>3</experiments>
</comment>
<comment type="interaction">
    <interactant intactId="EBI-7705033">
        <id>Q9BRX9</id>
    </interactant>
    <interactant intactId="EBI-607755">
        <id>Q9BZL1</id>
        <label>UBL5</label>
    </interactant>
    <organismsDiffer>false</organismsDiffer>
    <experiments>2</experiments>
</comment>
<comment type="interaction">
    <interactant intactId="EBI-7705033">
        <id>Q9BRX9</id>
    </interactant>
    <interactant intactId="EBI-2107455">
        <id>Q08AM6</id>
        <label>VAC14</label>
    </interactant>
    <organismsDiffer>false</organismsDiffer>
    <experiments>3</experiments>
</comment>
<comment type="interaction">
    <interactant intactId="EBI-7705033">
        <id>Q9BRX9</id>
    </interactant>
    <interactant intactId="EBI-720609">
        <id>O76024</id>
        <label>WFS1</label>
    </interactant>
    <organismsDiffer>false</organismsDiffer>
    <experiments>3</experiments>
</comment>
<comment type="interaction">
    <interactant intactId="EBI-7705033">
        <id>Q9BRX9</id>
    </interactant>
    <interactant intactId="EBI-7254550">
        <id>P36508</id>
        <label>ZNF76</label>
    </interactant>
    <organismsDiffer>false</organismsDiffer>
    <experiments>3</experiments>
</comment>
<comment type="subcellular location">
    <subcellularLocation>
        <location evidence="4">Cytoplasm</location>
    </subcellularLocation>
    <subcellularLocation>
        <location evidence="4">Lysosome</location>
    </subcellularLocation>
    <subcellularLocation>
        <location evidence="1">Nucleus</location>
    </subcellularLocation>
    <text evidence="1">Predominantly cytoplasmic. Partially nuclear.</text>
</comment>
<comment type="similarity">
    <text evidence="5">Belongs to the WD repeat MORG1 family.</text>
</comment>
<keyword id="KW-0963">Cytoplasm</keyword>
<keyword id="KW-0458">Lysosome</keyword>
<keyword id="KW-0507">mRNA processing</keyword>
<keyword id="KW-0508">mRNA splicing</keyword>
<keyword id="KW-0539">Nucleus</keyword>
<keyword id="KW-1267">Proteomics identification</keyword>
<keyword id="KW-1185">Reference proteome</keyword>
<keyword id="KW-0677">Repeat</keyword>
<keyword id="KW-0747">Spliceosome</keyword>
<keyword id="KW-0853">WD repeat</keyword>